<protein>
    <recommendedName>
        <fullName>Ubiquitin-conjugating enzyme E2 D2</fullName>
        <ecNumber>2.3.2.23</ecNumber>
    </recommendedName>
    <alternativeName>
        <fullName>(E3-independent) E2 ubiquitin-conjugating enzyme D2</fullName>
        <ecNumber>2.3.2.24</ecNumber>
    </alternativeName>
    <alternativeName>
        <fullName>E2 ubiquitin-conjugating enzyme D2</fullName>
    </alternativeName>
    <alternativeName>
        <fullName>Ubiquitin carrier protein 4</fullName>
        <shortName>xUBC4</shortName>
    </alternativeName>
    <alternativeName>
        <fullName>Ubiquitin carrier protein D2</fullName>
    </alternativeName>
    <alternativeName>
        <fullName>Ubiquitin-protein ligase D2</fullName>
    </alternativeName>
</protein>
<proteinExistence type="evidence at protein level"/>
<comment type="function">
    <text evidence="2">Catalyzes the covalent attachment of ubiquitin to other proteins. Mediates the selective degradation of short-lived and abnormal proteins. Functions in the E6/E6-AP-induced ubiquitination of p53/TP53.</text>
</comment>
<comment type="catalytic activity">
    <reaction evidence="1 2 3">
        <text>S-ubiquitinyl-[E1 ubiquitin-activating enzyme]-L-cysteine + [E2 ubiquitin-conjugating enzyme]-L-cysteine = [E1 ubiquitin-activating enzyme]-L-cysteine + S-ubiquitinyl-[E2 ubiquitin-conjugating enzyme]-L-cysteine.</text>
        <dbReference type="EC" id="2.3.2.23"/>
    </reaction>
</comment>
<comment type="catalytic activity">
    <reaction evidence="1">
        <text>S-ubiquitinyl-[E1 ubiquitin-activating enzyme]-L-cysteine + [acceptor protein]-L-lysine = [E1 ubiquitin-activating enzyme]-L-cysteine + N(6)-monoubiquitinyl-[acceptor protein]-L-lysine.</text>
        <dbReference type="EC" id="2.3.2.24"/>
    </reaction>
</comment>
<comment type="pathway">
    <text evidence="2">Protein modification; protein ubiquitination.</text>
</comment>
<comment type="subunit">
    <text evidence="1">Interacts with SCF (SKP1-CUL1-F-box protein) E3 ubiquitin ligase complex.</text>
</comment>
<comment type="similarity">
    <text evidence="2">Belongs to the ubiquitin-conjugating enzyme family.</text>
</comment>
<dbReference type="EC" id="2.3.2.23"/>
<dbReference type="EC" id="2.3.2.24"/>
<dbReference type="EMBL" id="AB105546">
    <property type="protein sequence ID" value="BAD06215.1"/>
    <property type="molecule type" value="mRNA"/>
</dbReference>
<dbReference type="EMBL" id="BC084359">
    <property type="protein sequence ID" value="AAH84359.1"/>
    <property type="molecule type" value="mRNA"/>
</dbReference>
<dbReference type="RefSeq" id="NP_001084434.1">
    <property type="nucleotide sequence ID" value="NM_001090965.1"/>
</dbReference>
<dbReference type="PDB" id="3EB6">
    <property type="method" value="X-ray"/>
    <property type="resolution" value="3.40 A"/>
    <property type="chains" value="B=1-147"/>
</dbReference>
<dbReference type="PDBsum" id="3EB6"/>
<dbReference type="SMR" id="P62840"/>
<dbReference type="BioGRID" id="100827">
    <property type="interactions" value="2"/>
</dbReference>
<dbReference type="DNASU" id="403384"/>
<dbReference type="GeneID" id="108706735"/>
<dbReference type="GeneID" id="403384"/>
<dbReference type="KEGG" id="xla:108706735"/>
<dbReference type="KEGG" id="xla:403384"/>
<dbReference type="AGR" id="Xenbase:XB-GENE-972284"/>
<dbReference type="CTD" id="108706735"/>
<dbReference type="CTD" id="403384"/>
<dbReference type="Xenbase" id="XB-GENE-972284">
    <property type="gene designation" value="ube2d3.L"/>
</dbReference>
<dbReference type="OMA" id="TDRQKYD"/>
<dbReference type="OrthoDB" id="7851174at2759"/>
<dbReference type="UniPathway" id="UPA00143"/>
<dbReference type="EvolutionaryTrace" id="P62840"/>
<dbReference type="Proteomes" id="UP000186698">
    <property type="component" value="Chromosome 1L"/>
</dbReference>
<dbReference type="Proteomes" id="UP000186698">
    <property type="component" value="Chromosome 1S"/>
</dbReference>
<dbReference type="Bgee" id="108706735">
    <property type="expression patterns" value="Expressed in gastrula and 19 other cell types or tissues"/>
</dbReference>
<dbReference type="GO" id="GO:0005634">
    <property type="term" value="C:nucleus"/>
    <property type="evidence" value="ECO:0000318"/>
    <property type="project" value="GO_Central"/>
</dbReference>
<dbReference type="GO" id="GO:0005524">
    <property type="term" value="F:ATP binding"/>
    <property type="evidence" value="ECO:0007669"/>
    <property type="project" value="UniProtKB-KW"/>
</dbReference>
<dbReference type="GO" id="GO:0061631">
    <property type="term" value="F:ubiquitin conjugating enzyme activity"/>
    <property type="evidence" value="ECO:0000318"/>
    <property type="project" value="GO_Central"/>
</dbReference>
<dbReference type="GO" id="GO:0070936">
    <property type="term" value="P:protein K48-linked ubiquitination"/>
    <property type="evidence" value="ECO:0000318"/>
    <property type="project" value="GO_Central"/>
</dbReference>
<dbReference type="GO" id="GO:0006511">
    <property type="term" value="P:ubiquitin-dependent protein catabolic process"/>
    <property type="evidence" value="ECO:0000318"/>
    <property type="project" value="GO_Central"/>
</dbReference>
<dbReference type="CDD" id="cd23792">
    <property type="entry name" value="UBCc_UBE2D"/>
    <property type="match status" value="1"/>
</dbReference>
<dbReference type="FunFam" id="3.10.110.10:FF:000101">
    <property type="entry name" value="Ubiquitin-conjugating enzyme E2 D2"/>
    <property type="match status" value="1"/>
</dbReference>
<dbReference type="Gene3D" id="3.10.110.10">
    <property type="entry name" value="Ubiquitin Conjugating Enzyme"/>
    <property type="match status" value="1"/>
</dbReference>
<dbReference type="InterPro" id="IPR000608">
    <property type="entry name" value="UBQ-conjugat_E2_core"/>
</dbReference>
<dbReference type="InterPro" id="IPR023313">
    <property type="entry name" value="UBQ-conjugating_AS"/>
</dbReference>
<dbReference type="InterPro" id="IPR016135">
    <property type="entry name" value="UBQ-conjugating_enzyme/RWD"/>
</dbReference>
<dbReference type="PANTHER" id="PTHR24068">
    <property type="entry name" value="UBIQUITIN-CONJUGATING ENZYME E2"/>
    <property type="match status" value="1"/>
</dbReference>
<dbReference type="Pfam" id="PF00179">
    <property type="entry name" value="UQ_con"/>
    <property type="match status" value="1"/>
</dbReference>
<dbReference type="SMART" id="SM00212">
    <property type="entry name" value="UBCc"/>
    <property type="match status" value="1"/>
</dbReference>
<dbReference type="SUPFAM" id="SSF54495">
    <property type="entry name" value="UBC-like"/>
    <property type="match status" value="1"/>
</dbReference>
<dbReference type="PROSITE" id="PS00183">
    <property type="entry name" value="UBC_1"/>
    <property type="match status" value="1"/>
</dbReference>
<dbReference type="PROSITE" id="PS50127">
    <property type="entry name" value="UBC_2"/>
    <property type="match status" value="1"/>
</dbReference>
<reference key="1">
    <citation type="submission" date="2003-03" db="EMBL/GenBank/DDBJ databases">
        <title>Molecular cloning of cDNAs encoding Xenopus ubiquitin-conjugating enzyme(E2) and their expression in various Xenopus tissues.</title>
        <authorList>
            <person name="Karasawa A."/>
            <person name="Matushita H."/>
            <person name="Yagura T."/>
        </authorList>
    </citation>
    <scope>NUCLEOTIDE SEQUENCE [MRNA]</scope>
    <source>
        <tissue>Oocyte</tissue>
    </source>
</reference>
<reference key="2">
    <citation type="submission" date="2004-10" db="EMBL/GenBank/DDBJ databases">
        <authorList>
            <consortium name="NIH - Xenopus Gene Collection (XGC) project"/>
        </authorList>
    </citation>
    <scope>NUCLEOTIDE SEQUENCE [LARGE SCALE MRNA]</scope>
    <source>
        <tissue>Eye</tissue>
    </source>
</reference>
<reference key="3">
    <citation type="journal article" date="2008" name="Differentiation">
        <title>A ubiquitin-conjugating enzyme, ube2d3.2, regulates xMLK2 and pronephros formation in Xenopus.</title>
        <authorList>
            <person name="Jean S."/>
            <person name="Moss T."/>
        </authorList>
    </citation>
    <scope>NOMENCLATURE</scope>
</reference>
<organism>
    <name type="scientific">Xenopus laevis</name>
    <name type="common">African clawed frog</name>
    <dbReference type="NCBI Taxonomy" id="8355"/>
    <lineage>
        <taxon>Eukaryota</taxon>
        <taxon>Metazoa</taxon>
        <taxon>Chordata</taxon>
        <taxon>Craniata</taxon>
        <taxon>Vertebrata</taxon>
        <taxon>Euteleostomi</taxon>
        <taxon>Amphibia</taxon>
        <taxon>Batrachia</taxon>
        <taxon>Anura</taxon>
        <taxon>Pipoidea</taxon>
        <taxon>Pipidae</taxon>
        <taxon>Xenopodinae</taxon>
        <taxon>Xenopus</taxon>
        <taxon>Xenopus</taxon>
    </lineage>
</organism>
<accession>P62840</accession>
<accession>P51669</accession>
<accession>Q5XGS3</accession>
<feature type="chain" id="PRO_0000082465" description="Ubiquitin-conjugating enzyme E2 D2">
    <location>
        <begin position="1"/>
        <end position="147"/>
    </location>
</feature>
<feature type="domain" description="UBC core" evidence="2">
    <location>
        <begin position="1"/>
        <end position="147"/>
    </location>
</feature>
<feature type="active site" description="Glycyl thioester intermediate" evidence="2 3">
    <location>
        <position position="85"/>
    </location>
</feature>
<feature type="helix" evidence="4">
    <location>
        <begin position="2"/>
        <end position="15"/>
    </location>
</feature>
<feature type="strand" evidence="4">
    <location>
        <begin position="21"/>
        <end position="28"/>
    </location>
</feature>
<feature type="strand" evidence="4">
    <location>
        <begin position="32"/>
        <end position="37"/>
    </location>
</feature>
<feature type="strand" evidence="4">
    <location>
        <begin position="50"/>
        <end position="55"/>
    </location>
</feature>
<feature type="turn" evidence="4">
    <location>
        <begin position="58"/>
        <end position="62"/>
    </location>
</feature>
<feature type="strand" evidence="4">
    <location>
        <begin position="66"/>
        <end position="71"/>
    </location>
</feature>
<feature type="turn" evidence="4">
    <location>
        <begin position="87"/>
        <end position="92"/>
    </location>
</feature>
<feature type="helix" evidence="4">
    <location>
        <begin position="99"/>
        <end position="111"/>
    </location>
</feature>
<feature type="helix" evidence="4">
    <location>
        <begin position="121"/>
        <end position="129"/>
    </location>
</feature>
<feature type="helix" evidence="4">
    <location>
        <begin position="131"/>
        <end position="145"/>
    </location>
</feature>
<name>UB2D2_XENLA</name>
<evidence type="ECO:0000250" key="1">
    <source>
        <dbReference type="UniProtKB" id="P62837"/>
    </source>
</evidence>
<evidence type="ECO:0000255" key="2">
    <source>
        <dbReference type="PROSITE-ProRule" id="PRU00388"/>
    </source>
</evidence>
<evidence type="ECO:0000255" key="3">
    <source>
        <dbReference type="PROSITE-ProRule" id="PRU10133"/>
    </source>
</evidence>
<evidence type="ECO:0007829" key="4">
    <source>
        <dbReference type="PDB" id="3EB6"/>
    </source>
</evidence>
<sequence>MALKRIHKELNDLARDPPAQCSAGPVGDDMFHWQATIMGPNDSPYQGGVFFLTIHFPTDYPFKPPKVAFTTRIYHPNINSNGSICLDILRSQWSPALTISKVLLSICSLLCDPNPDDPLVPEIARIYKTDREKYNRIAREWTQKYAM</sequence>
<gene>
    <name type="primary">ube2d2</name>
    <name type="synonym">ubc4</name>
    <name type="synonym">ube2d3.1</name>
</gene>
<keyword id="KW-0002">3D-structure</keyword>
<keyword id="KW-0067">ATP-binding</keyword>
<keyword id="KW-0547">Nucleotide-binding</keyword>
<keyword id="KW-1185">Reference proteome</keyword>
<keyword id="KW-0808">Transferase</keyword>
<keyword id="KW-0833">Ubl conjugation pathway</keyword>